<protein>
    <recommendedName>
        <fullName>Cytochrome b</fullName>
    </recommendedName>
    <alternativeName>
        <fullName>Complex III subunit 3</fullName>
    </alternativeName>
    <alternativeName>
        <fullName>Complex III subunit III</fullName>
    </alternativeName>
    <alternativeName>
        <fullName>Cytochrome b-c1 complex subunit 3</fullName>
    </alternativeName>
    <alternativeName>
        <fullName>Ubiquinol-cytochrome-c reductase complex cytochrome b subunit</fullName>
    </alternativeName>
</protein>
<sequence>MTNIRKNHPLMKIVNHSLIDLPTPSNISAWWNFGSLLGLCLGIQIITGLFLAMHYTSDTLTAFSSVTHICRDVNYGWIIRYLHANGASMVFTCLFLHMGWGIYYGSYTYSETWNIGILLLFMVMATTFMGYVLPWGQMSFWGATVITNLLSAIPYIGTDLVQWIWGGFSVDKATLTRFFAFHFILPFIIAALVMVHLLFLHETGSNNPTGIISDADKIPFHPYYTVKDALGFLLLITLLLTLVLFSPDLLGDPDNYTPANPLNTPPHIKPEWYFLFAYAILRSIPNKLGGVLALVLSIAILAIMPFLHTSKQRSMMFRPISQTLFWILVADLLTLTWIGGQPVEHPFIIIGQLASFLYFFLILILMPTCSLIENKLLKW</sequence>
<name>CYB_OCHAL</name>
<proteinExistence type="inferred from homology"/>
<keyword id="KW-0249">Electron transport</keyword>
<keyword id="KW-0349">Heme</keyword>
<keyword id="KW-0408">Iron</keyword>
<keyword id="KW-0472">Membrane</keyword>
<keyword id="KW-0479">Metal-binding</keyword>
<keyword id="KW-0496">Mitochondrion</keyword>
<keyword id="KW-0999">Mitochondrion inner membrane</keyword>
<keyword id="KW-0679">Respiratory chain</keyword>
<keyword id="KW-0812">Transmembrane</keyword>
<keyword id="KW-1133">Transmembrane helix</keyword>
<keyword id="KW-0813">Transport</keyword>
<keyword id="KW-0830">Ubiquinone</keyword>
<accession>Q9GBY1</accession>
<comment type="function">
    <text evidence="2">Component of the ubiquinol-cytochrome c reductase complex (complex III or cytochrome b-c1 complex) that is part of the mitochondrial respiratory chain. The b-c1 complex mediates electron transfer from ubiquinol to cytochrome c. Contributes to the generation of a proton gradient across the mitochondrial membrane that is then used for ATP synthesis.</text>
</comment>
<comment type="cofactor">
    <cofactor evidence="2">
        <name>heme b</name>
        <dbReference type="ChEBI" id="CHEBI:60344"/>
    </cofactor>
    <text evidence="2">Binds 2 heme b groups non-covalently.</text>
</comment>
<comment type="subunit">
    <text evidence="2">The cytochrome bc1 complex contains 11 subunits: 3 respiratory subunits (MT-CYB, CYC1 and UQCRFS1), 2 core proteins (UQCRC1 and UQCRC2) and 6 low-molecular weight proteins (UQCRH/QCR6, UQCRB/QCR7, UQCRQ/QCR8, UQCR10/QCR9, UQCR11/QCR10 and a cleavage product of UQCRFS1). This cytochrome bc1 complex then forms a dimer.</text>
</comment>
<comment type="subcellular location">
    <subcellularLocation>
        <location evidence="2">Mitochondrion inner membrane</location>
        <topology evidence="2">Multi-pass membrane protein</topology>
    </subcellularLocation>
</comment>
<comment type="miscellaneous">
    <text evidence="1">Heme 1 (or BL or b562) is low-potential and absorbs at about 562 nm, and heme 2 (or BH or b566) is high-potential and absorbs at about 566 nm.</text>
</comment>
<comment type="similarity">
    <text evidence="3 4">Belongs to the cytochrome b family.</text>
</comment>
<comment type="caution">
    <text evidence="2">The full-length protein contains only eight transmembrane helices, not nine as predicted by bioinformatics tools.</text>
</comment>
<dbReference type="EMBL" id="AF273009">
    <property type="protein sequence ID" value="AAG00204.1"/>
    <property type="molecule type" value="Genomic_DNA"/>
</dbReference>
<dbReference type="SMR" id="Q9GBY1"/>
<dbReference type="GO" id="GO:0005743">
    <property type="term" value="C:mitochondrial inner membrane"/>
    <property type="evidence" value="ECO:0007669"/>
    <property type="project" value="UniProtKB-SubCell"/>
</dbReference>
<dbReference type="GO" id="GO:0045275">
    <property type="term" value="C:respiratory chain complex III"/>
    <property type="evidence" value="ECO:0007669"/>
    <property type="project" value="InterPro"/>
</dbReference>
<dbReference type="GO" id="GO:0046872">
    <property type="term" value="F:metal ion binding"/>
    <property type="evidence" value="ECO:0007669"/>
    <property type="project" value="UniProtKB-KW"/>
</dbReference>
<dbReference type="GO" id="GO:0008121">
    <property type="term" value="F:ubiquinol-cytochrome-c reductase activity"/>
    <property type="evidence" value="ECO:0007669"/>
    <property type="project" value="InterPro"/>
</dbReference>
<dbReference type="GO" id="GO:0006122">
    <property type="term" value="P:mitochondrial electron transport, ubiquinol to cytochrome c"/>
    <property type="evidence" value="ECO:0007669"/>
    <property type="project" value="TreeGrafter"/>
</dbReference>
<dbReference type="CDD" id="cd00290">
    <property type="entry name" value="cytochrome_b_C"/>
    <property type="match status" value="1"/>
</dbReference>
<dbReference type="CDD" id="cd00284">
    <property type="entry name" value="Cytochrome_b_N"/>
    <property type="match status" value="1"/>
</dbReference>
<dbReference type="FunFam" id="1.20.810.10:FF:000002">
    <property type="entry name" value="Cytochrome b"/>
    <property type="match status" value="1"/>
</dbReference>
<dbReference type="Gene3D" id="1.20.810.10">
    <property type="entry name" value="Cytochrome Bc1 Complex, Chain C"/>
    <property type="match status" value="1"/>
</dbReference>
<dbReference type="InterPro" id="IPR005798">
    <property type="entry name" value="Cyt_b/b6_C"/>
</dbReference>
<dbReference type="InterPro" id="IPR036150">
    <property type="entry name" value="Cyt_b/b6_C_sf"/>
</dbReference>
<dbReference type="InterPro" id="IPR005797">
    <property type="entry name" value="Cyt_b/b6_N"/>
</dbReference>
<dbReference type="InterPro" id="IPR027387">
    <property type="entry name" value="Cytb/b6-like_sf"/>
</dbReference>
<dbReference type="InterPro" id="IPR030689">
    <property type="entry name" value="Cytochrome_b"/>
</dbReference>
<dbReference type="InterPro" id="IPR048260">
    <property type="entry name" value="Cytochrome_b_C_euk/bac"/>
</dbReference>
<dbReference type="InterPro" id="IPR048259">
    <property type="entry name" value="Cytochrome_b_N_euk/bac"/>
</dbReference>
<dbReference type="InterPro" id="IPR016174">
    <property type="entry name" value="Di-haem_cyt_TM"/>
</dbReference>
<dbReference type="PANTHER" id="PTHR19271">
    <property type="entry name" value="CYTOCHROME B"/>
    <property type="match status" value="1"/>
</dbReference>
<dbReference type="PANTHER" id="PTHR19271:SF16">
    <property type="entry name" value="CYTOCHROME B"/>
    <property type="match status" value="1"/>
</dbReference>
<dbReference type="Pfam" id="PF00032">
    <property type="entry name" value="Cytochrom_B_C"/>
    <property type="match status" value="1"/>
</dbReference>
<dbReference type="Pfam" id="PF00033">
    <property type="entry name" value="Cytochrome_B"/>
    <property type="match status" value="1"/>
</dbReference>
<dbReference type="PIRSF" id="PIRSF038885">
    <property type="entry name" value="COB"/>
    <property type="match status" value="1"/>
</dbReference>
<dbReference type="SUPFAM" id="SSF81648">
    <property type="entry name" value="a domain/subunit of cytochrome bc1 complex (Ubiquinol-cytochrome c reductase)"/>
    <property type="match status" value="1"/>
</dbReference>
<dbReference type="SUPFAM" id="SSF81342">
    <property type="entry name" value="Transmembrane di-heme cytochromes"/>
    <property type="match status" value="1"/>
</dbReference>
<dbReference type="PROSITE" id="PS51003">
    <property type="entry name" value="CYTB_CTER"/>
    <property type="match status" value="1"/>
</dbReference>
<dbReference type="PROSITE" id="PS51002">
    <property type="entry name" value="CYTB_NTER"/>
    <property type="match status" value="1"/>
</dbReference>
<feature type="chain" id="PRO_0000061296" description="Cytochrome b">
    <location>
        <begin position="1"/>
        <end position="379"/>
    </location>
</feature>
<feature type="transmembrane region" description="Helical" evidence="2">
    <location>
        <begin position="33"/>
        <end position="53"/>
    </location>
</feature>
<feature type="transmembrane region" description="Helical" evidence="2">
    <location>
        <begin position="77"/>
        <end position="98"/>
    </location>
</feature>
<feature type="transmembrane region" description="Helical" evidence="2">
    <location>
        <begin position="113"/>
        <end position="133"/>
    </location>
</feature>
<feature type="transmembrane region" description="Helical" evidence="2">
    <location>
        <begin position="178"/>
        <end position="198"/>
    </location>
</feature>
<feature type="transmembrane region" description="Helical" evidence="2">
    <location>
        <begin position="226"/>
        <end position="246"/>
    </location>
</feature>
<feature type="transmembrane region" description="Helical" evidence="2">
    <location>
        <begin position="288"/>
        <end position="308"/>
    </location>
</feature>
<feature type="transmembrane region" description="Helical" evidence="2">
    <location>
        <begin position="320"/>
        <end position="340"/>
    </location>
</feature>
<feature type="transmembrane region" description="Helical" evidence="2">
    <location>
        <begin position="347"/>
        <end position="367"/>
    </location>
</feature>
<feature type="binding site" description="axial binding residue" evidence="2">
    <location>
        <position position="83"/>
    </location>
    <ligand>
        <name>heme b</name>
        <dbReference type="ChEBI" id="CHEBI:60344"/>
        <label>b562</label>
    </ligand>
    <ligandPart>
        <name>Fe</name>
        <dbReference type="ChEBI" id="CHEBI:18248"/>
    </ligandPart>
</feature>
<feature type="binding site" description="axial binding residue" evidence="2">
    <location>
        <position position="97"/>
    </location>
    <ligand>
        <name>heme b</name>
        <dbReference type="ChEBI" id="CHEBI:60344"/>
        <label>b566</label>
    </ligand>
    <ligandPart>
        <name>Fe</name>
        <dbReference type="ChEBI" id="CHEBI:18248"/>
    </ligandPart>
</feature>
<feature type="binding site" description="axial binding residue" evidence="2">
    <location>
        <position position="182"/>
    </location>
    <ligand>
        <name>heme b</name>
        <dbReference type="ChEBI" id="CHEBI:60344"/>
        <label>b562</label>
    </ligand>
    <ligandPart>
        <name>Fe</name>
        <dbReference type="ChEBI" id="CHEBI:18248"/>
    </ligandPart>
</feature>
<feature type="binding site" description="axial binding residue" evidence="2">
    <location>
        <position position="196"/>
    </location>
    <ligand>
        <name>heme b</name>
        <dbReference type="ChEBI" id="CHEBI:60344"/>
        <label>b566</label>
    </ligand>
    <ligandPart>
        <name>Fe</name>
        <dbReference type="ChEBI" id="CHEBI:18248"/>
    </ligandPart>
</feature>
<feature type="binding site" evidence="2">
    <location>
        <position position="201"/>
    </location>
    <ligand>
        <name>a ubiquinone</name>
        <dbReference type="ChEBI" id="CHEBI:16389"/>
    </ligand>
</feature>
<reference key="1">
    <citation type="journal article" date="2000" name="Mol. Phylogenet. Evol.">
        <title>Molecular systematics of pikas (genus Ochotona) inferred from mitochondrial DNA sequences.</title>
        <authorList>
            <person name="Yu N."/>
            <person name="Zheng C."/>
            <person name="Zhang Y.P."/>
            <person name="Li W.H."/>
        </authorList>
    </citation>
    <scope>NUCLEOTIDE SEQUENCE [GENOMIC DNA]</scope>
</reference>
<geneLocation type="mitochondrion"/>
<evidence type="ECO:0000250" key="1"/>
<evidence type="ECO:0000250" key="2">
    <source>
        <dbReference type="UniProtKB" id="P00157"/>
    </source>
</evidence>
<evidence type="ECO:0000255" key="3">
    <source>
        <dbReference type="PROSITE-ProRule" id="PRU00967"/>
    </source>
</evidence>
<evidence type="ECO:0000255" key="4">
    <source>
        <dbReference type="PROSITE-ProRule" id="PRU00968"/>
    </source>
</evidence>
<organism>
    <name type="scientific">Ochotona alpina</name>
    <name type="common">Altai pika</name>
    <dbReference type="NCBI Taxonomy" id="130819"/>
    <lineage>
        <taxon>Eukaryota</taxon>
        <taxon>Metazoa</taxon>
        <taxon>Chordata</taxon>
        <taxon>Craniata</taxon>
        <taxon>Vertebrata</taxon>
        <taxon>Euteleostomi</taxon>
        <taxon>Mammalia</taxon>
        <taxon>Eutheria</taxon>
        <taxon>Euarchontoglires</taxon>
        <taxon>Glires</taxon>
        <taxon>Lagomorpha</taxon>
        <taxon>Ochotonidae</taxon>
        <taxon>Ochotona</taxon>
    </lineage>
</organism>
<gene>
    <name type="primary">MT-CYB</name>
    <name type="synonym">COB</name>
    <name type="synonym">CYTB</name>
    <name type="synonym">MTCYB</name>
</gene>